<accession>Q9ESD7</accession>
<accession>Q6KAR3</accession>
<accession>Q80VT0</accession>
<accession>Q9QXC0</accession>
<feature type="chain" id="PRO_0000057880" description="Dysferlin">
    <location>
        <begin position="1"/>
        <end position="2090"/>
    </location>
</feature>
<feature type="topological domain" description="Cytoplasmic" evidence="3">
    <location>
        <begin position="1"/>
        <end position="2056"/>
    </location>
</feature>
<feature type="transmembrane region" description="Helical" evidence="3">
    <location>
        <begin position="2057"/>
        <end position="2077"/>
    </location>
</feature>
<feature type="topological domain" description="Extracellular" evidence="3">
    <location>
        <begin position="2078"/>
        <end position="2090"/>
    </location>
</feature>
<feature type="domain" description="C2 1" evidence="4">
    <location>
        <begin position="1"/>
        <end position="101"/>
    </location>
</feature>
<feature type="domain" description="C2 2" evidence="4">
    <location>
        <begin position="206"/>
        <end position="323"/>
    </location>
</feature>
<feature type="domain" description="C2 3" evidence="4">
    <location>
        <begin position="362"/>
        <end position="498"/>
    </location>
</feature>
<feature type="domain" description="C2 4" evidence="4">
    <location>
        <begin position="1146"/>
        <end position="1272"/>
    </location>
</feature>
<feature type="domain" description="C2 5" evidence="4">
    <location>
        <begin position="1320"/>
        <end position="1448"/>
    </location>
</feature>
<feature type="domain" description="C2 6" evidence="4">
    <location>
        <begin position="1571"/>
        <end position="1689"/>
    </location>
</feature>
<feature type="domain" description="C2 7" evidence="4">
    <location>
        <begin position="1805"/>
        <end position="1953"/>
    </location>
</feature>
<feature type="region of interest" description="Disordered" evidence="5">
    <location>
        <begin position="130"/>
        <end position="217"/>
    </location>
</feature>
<feature type="region of interest" description="Disordered" evidence="5">
    <location>
        <begin position="2005"/>
        <end position="2027"/>
    </location>
</feature>
<feature type="compositionally biased region" description="Acidic residues" evidence="5">
    <location>
        <begin position="155"/>
        <end position="172"/>
    </location>
</feature>
<feature type="compositionally biased region" description="Pro residues" evidence="5">
    <location>
        <begin position="188"/>
        <end position="199"/>
    </location>
</feature>
<feature type="binding site" evidence="1">
    <location>
        <position position="18"/>
    </location>
    <ligand>
        <name>Ca(2+)</name>
        <dbReference type="ChEBI" id="CHEBI:29108"/>
        <label>1</label>
    </ligand>
</feature>
<feature type="binding site" evidence="1">
    <location>
        <position position="19"/>
    </location>
    <ligand>
        <name>Ca(2+)</name>
        <dbReference type="ChEBI" id="CHEBI:29108"/>
        <label>1</label>
    </ligand>
</feature>
<feature type="binding site" evidence="1">
    <location>
        <position position="21"/>
    </location>
    <ligand>
        <name>Ca(2+)</name>
        <dbReference type="ChEBI" id="CHEBI:29108"/>
        <label>1</label>
    </ligand>
</feature>
<feature type="binding site" evidence="1">
    <location>
        <position position="40"/>
    </location>
    <ligand>
        <name>Ca(2+)</name>
        <dbReference type="ChEBI" id="CHEBI:29108"/>
        <label>1</label>
    </ligand>
</feature>
<feature type="binding site" evidence="4">
    <location>
        <position position="411"/>
    </location>
    <ligand>
        <name>Ca(2+)</name>
        <dbReference type="ChEBI" id="CHEBI:29108"/>
        <label>2</label>
    </ligand>
</feature>
<feature type="binding site" evidence="4">
    <location>
        <position position="411"/>
    </location>
    <ligand>
        <name>Ca(2+)</name>
        <dbReference type="ChEBI" id="CHEBI:29108"/>
        <label>3</label>
    </ligand>
</feature>
<feature type="binding site" evidence="4">
    <location>
        <position position="419"/>
    </location>
    <ligand>
        <name>Ca(2+)</name>
        <dbReference type="ChEBI" id="CHEBI:29108"/>
        <label>2</label>
    </ligand>
</feature>
<feature type="binding site" evidence="4">
    <location>
        <position position="467"/>
    </location>
    <ligand>
        <name>Ca(2+)</name>
        <dbReference type="ChEBI" id="CHEBI:29108"/>
        <label>2</label>
    </ligand>
</feature>
<feature type="binding site" evidence="4">
    <location>
        <position position="467"/>
    </location>
    <ligand>
        <name>Ca(2+)</name>
        <dbReference type="ChEBI" id="CHEBI:29108"/>
        <label>3</label>
    </ligand>
</feature>
<feature type="binding site" evidence="4">
    <location>
        <position position="469"/>
    </location>
    <ligand>
        <name>Ca(2+)</name>
        <dbReference type="ChEBI" id="CHEBI:29108"/>
        <label>2</label>
    </ligand>
</feature>
<feature type="binding site" evidence="4">
    <location>
        <position position="469"/>
    </location>
    <ligand>
        <name>Ca(2+)</name>
        <dbReference type="ChEBI" id="CHEBI:29108"/>
        <label>3</label>
    </ligand>
</feature>
<feature type="binding site" evidence="4">
    <location>
        <position position="475"/>
    </location>
    <ligand>
        <name>Ca(2+)</name>
        <dbReference type="ChEBI" id="CHEBI:29108"/>
        <label>3</label>
    </ligand>
</feature>
<feature type="binding site" evidence="4">
    <location>
        <position position="1178"/>
    </location>
    <ligand>
        <name>Ca(2+)</name>
        <dbReference type="ChEBI" id="CHEBI:29108"/>
        <label>4</label>
    </ligand>
</feature>
<feature type="binding site" evidence="4">
    <location>
        <position position="1184"/>
    </location>
    <ligand>
        <name>Ca(2+)</name>
        <dbReference type="ChEBI" id="CHEBI:29108"/>
        <label>4</label>
    </ligand>
</feature>
<feature type="binding site" evidence="4">
    <location>
        <position position="1240"/>
    </location>
    <ligand>
        <name>Ca(2+)</name>
        <dbReference type="ChEBI" id="CHEBI:29108"/>
        <label>4</label>
    </ligand>
</feature>
<feature type="binding site" evidence="4">
    <location>
        <position position="1242"/>
    </location>
    <ligand>
        <name>Ca(2+)</name>
        <dbReference type="ChEBI" id="CHEBI:29108"/>
        <label>4</label>
    </ligand>
</feature>
<feature type="binding site" evidence="4">
    <location>
        <position position="1604"/>
    </location>
    <ligand>
        <name>Ca(2+)</name>
        <dbReference type="ChEBI" id="CHEBI:29108"/>
        <label>5</label>
    </ligand>
</feature>
<feature type="binding site" evidence="4">
    <location>
        <position position="1610"/>
    </location>
    <ligand>
        <name>Ca(2+)</name>
        <dbReference type="ChEBI" id="CHEBI:29108"/>
        <label>5</label>
    </ligand>
</feature>
<feature type="binding site" evidence="4">
    <location>
        <position position="1659"/>
    </location>
    <ligand>
        <name>Ca(2+)</name>
        <dbReference type="ChEBI" id="CHEBI:29108"/>
        <label>5</label>
    </ligand>
</feature>
<feature type="binding site" evidence="4">
    <location>
        <position position="1661"/>
    </location>
    <ligand>
        <name>Ca(2+)</name>
        <dbReference type="ChEBI" id="CHEBI:29108"/>
        <label>5</label>
    </ligand>
</feature>
<feature type="binding site" evidence="4">
    <location>
        <position position="1924"/>
    </location>
    <ligand>
        <name>Ca(2+)</name>
        <dbReference type="ChEBI" id="CHEBI:29108"/>
        <label>6</label>
    </ligand>
</feature>
<feature type="binding site" evidence="4">
    <location>
        <position position="1927"/>
    </location>
    <ligand>
        <name>Ca(2+)</name>
        <dbReference type="ChEBI" id="CHEBI:29108"/>
        <label>6</label>
    </ligand>
</feature>
<feature type="binding site" evidence="4">
    <location>
        <position position="1930"/>
    </location>
    <ligand>
        <name>Ca(2+)</name>
        <dbReference type="ChEBI" id="CHEBI:29108"/>
        <label>6</label>
    </ligand>
</feature>
<feature type="modified residue" description="Phosphothreonine" evidence="2">
    <location>
        <position position="166"/>
    </location>
</feature>
<feature type="splice variant" id="VSP_035930" description="In isoform 2 and isoform 3." evidence="14 15">
    <original>MLRVFILFAENVHTPDSDISDAYCSAVFA</original>
    <variation>MLCCLLARASNLPNVKKDRRSDPVASLIFR</variation>
    <location>
        <begin position="1"/>
        <end position="29"/>
    </location>
</feature>
<feature type="splice variant" id="VSP_035931" description="In isoform 2." evidence="15">
    <original>P</original>
    <variation>PGGGQSRAETWSLLSDSTMDTRYSGKKWPVPT</variation>
    <location>
        <position position="152"/>
    </location>
</feature>
<feature type="splice variant" id="VSP_035932" description="In isoform 2 and isoform 3." evidence="14 15">
    <original>EEPAGVLKSPQATDL</original>
    <variation>V</variation>
    <location>
        <begin position="496"/>
        <end position="510"/>
    </location>
</feature>
<feature type="splice variant" id="VSP_035933" description="In isoform 2 and isoform 3." evidence="14 15">
    <location>
        <begin position="647"/>
        <end position="654"/>
    </location>
</feature>
<feature type="sequence conflict" description="In Ref. 4; CAB63111." evidence="16" ref="4">
    <original>D</original>
    <variation>G</variation>
    <location>
        <position position="467"/>
    </location>
</feature>
<feature type="sequence conflict" description="In Ref. 1; AAG17046." evidence="16" ref="1">
    <original>T</original>
    <variation>I</variation>
    <location>
        <position position="476"/>
    </location>
</feature>
<feature type="sequence conflict" description="In Ref. 4; CAB63111." evidence="16" ref="4">
    <original>L</original>
    <variation>V</variation>
    <location>
        <position position="510"/>
    </location>
</feature>
<feature type="sequence conflict" description="In Ref. 1; AAG17046." evidence="16" ref="1">
    <original>I</original>
    <variation>T</variation>
    <location>
        <position position="684"/>
    </location>
</feature>
<feature type="sequence conflict" description="In Ref. 1; AAG17046." evidence="16" ref="1">
    <original>RV</original>
    <variation>GI</variation>
    <location>
        <begin position="690"/>
        <end position="691"/>
    </location>
</feature>
<feature type="sequence conflict" description="In Ref. 1; AAG17046." evidence="16" ref="1">
    <original>N</original>
    <variation>G</variation>
    <location>
        <position position="698"/>
    </location>
</feature>
<feature type="sequence conflict" description="In Ref. 1; AAG17046." evidence="16" ref="1">
    <original>S</original>
    <variation>T</variation>
    <location>
        <position position="712"/>
    </location>
</feature>
<feature type="sequence conflict" description="In Ref. 1; AAG17046." evidence="16" ref="1">
    <original>A</original>
    <variation>S</variation>
    <location>
        <position position="717"/>
    </location>
</feature>
<feature type="sequence conflict" description="In Ref. 1; AAG17046." evidence="16" ref="1">
    <original>L</original>
    <variation>I</variation>
    <location>
        <position position="727"/>
    </location>
</feature>
<feature type="sequence conflict" description="In Ref. 1; AAG17046." evidence="16" ref="1">
    <original>L</original>
    <variation>F</variation>
    <location>
        <position position="885"/>
    </location>
</feature>
<feature type="sequence conflict" description="In Ref. 1; AAG17046." evidence="16" ref="1">
    <original>LT</original>
    <variation>FS</variation>
    <location>
        <begin position="909"/>
        <end position="910"/>
    </location>
</feature>
<feature type="sequence conflict" description="In Ref. 1; AAG17046." evidence="16" ref="1">
    <original>S</original>
    <variation>T</variation>
    <location>
        <position position="931"/>
    </location>
</feature>
<feature type="sequence conflict" description="In Ref. 1; AAG17046." evidence="16" ref="1">
    <original>D</original>
    <variation>A</variation>
    <location>
        <position position="953"/>
    </location>
</feature>
<feature type="sequence conflict" description="In Ref. 1; AAG17046." evidence="16" ref="1">
    <original>P</original>
    <variation>A</variation>
    <location>
        <position position="1175"/>
    </location>
</feature>
<feature type="sequence conflict" description="In Ref. 4; CAB63111." evidence="16" ref="4">
    <original>A</original>
    <variation>S</variation>
    <location>
        <position position="1187"/>
    </location>
</feature>
<feature type="sequence conflict" description="In Ref. 1; AAG17046." evidence="16" ref="1">
    <original>Y</original>
    <variation>C</variation>
    <location>
        <position position="1694"/>
    </location>
</feature>
<feature type="sequence conflict" description="In Ref. 1; AAG17046." evidence="16" ref="1">
    <original>Q</original>
    <variation>K</variation>
    <location>
        <position position="1701"/>
    </location>
</feature>
<feature type="sequence conflict" description="In Ref. 1; AAG17046." evidence="16" ref="1">
    <original>Q</original>
    <variation>K</variation>
    <location>
        <position position="1705"/>
    </location>
</feature>
<feature type="sequence conflict" description="In Ref. 1; AAG17046." evidence="16" ref="1">
    <original>R</original>
    <variation>Q</variation>
    <location>
        <position position="1806"/>
    </location>
</feature>
<feature type="modified residue" description="Phosphoserine" evidence="17">
    <location sequence="Q9ESD7-2">
        <position position="164"/>
    </location>
</feature>
<feature type="modified residue" description="Phosphoserine" evidence="17">
    <location sequence="Q9ESD7-2">
        <position position="167"/>
    </location>
</feature>
<feature type="modified residue" description="Phosphoserine" evidence="17">
    <location sequence="Q9ESD7-2">
        <position position="209"/>
    </location>
</feature>
<feature type="modified residue" description="Phosphothreonine" evidence="17">
    <location sequence="Q9ESD7-2">
        <position position="219"/>
    </location>
</feature>
<proteinExistence type="evidence at protein level"/>
<gene>
    <name type="primary">Dysf</name>
    <name type="synonym">Fer1l1</name>
</gene>
<sequence>MLRVFILFAENVHTPDSDISDAYCSAVFAGVKKRTKVIKNSVNPVWNEGFEWDLKGIPLDQSSELLVVVKDHETMGRNRFLGEAKIPLQEVLATPSLSASFNAPLLDAKQQPTGASLVLQVSYTPPPGAVPLFPPPASLAPSPTLPDMDLVPDTGGEEDTEDQGLTGDEAEPFLDQSAAVGPGGPTTPRKPPSHPPPHYPGAKRKRSSAPPRKLLSDKPQDFQIRVQVIEGRQLPGVNIKPVVKVTAAGQTKRTRIQKGNSPLFNETLFFNVFDSPLELFDEPIFITVVDSRSLRTDALLGEFRMDVGTVYREPRHAYLRKWLLLSDPDDFSAGARGYLKASLCVLGPGDEAPLDKKDPSEDKEDIEGNLLRPTGVALRGAHFCLKLFRAEDLPQMDDAVMDNVKQIFGFDSNKKNLVDPFVEVSFAGKMLCSKILEKTANPQWNQNITLPAMFPSMCEKMRIRVMDWDRLTHNDTVATTYLGMSKISATGGEIEEEPAGVLKSPQATDLDDNLGFLPTFGPCYVNLYGSPREFTGFPDPYAELNTGKGEGVAYRGRVLLSLETKLVEHSEQKVEDLPADDILRVEKYLRRRKYSLFAAFYSATMLQDVDDAIQFEVSIGNYGNKFDTTCLPLASTTQYSRAVFDGGSLPLPVGCHYYYLPWGNVKPVVVLSSYWEDISHRIEIQNQLLRVADRLEANLEQVHLALKAQCSSEDVDALVAQLTDELLADCSQPLCDIHEIPSATHLDQYLLRLRTRHLSQIKEAALALKLGHSELSTALEQAEDWLLHLRALAEEPQNSLPDIIIWMLQGDKRVAYQRVPAHEVLFSRRGPSYCGRNCGKLQTIFLKYPMEGMPGARMPVQIRIKLWFGLSVDEKEFNQFAEGKLSVFAETYENQTKLALVGNWGTTGLTYPKFSDVTGKIKLPKDSFRPSAGWAWAGDWFVCPEKTLLHDADAGHLSFVEEVFENQTRLPGGQWIYMSDNYTDVNGEKVLPKDDIECPLGWKWEDEEWSTDLNRAVDEQGWEYSITIPPDRKPKHWVPVEKMYYTHRRRRWVRLRRRDLSQMEALKRHRQAEAEGEGWEYASLFGWKFHLEYRKTDAFRRRRWRRRMEPLEKTGPAAVFALEGALGGMVDDKSEDSMSVSTLSFGVNRPTISCIFDYGNRYHLRCYLYQARDLPAMDKDSFSDPYAIVSFLHQSQKTVVEKNTLNPTWDQTLIFYEIEIFGEPASIAEHPPCIVVELYDHDTYGADEFMGRCICQPSLERMPRLAWFPLTRGSQPAGELLAAFELIQREKPAIHHIPGFEMHETSRILDETEDTDLPYPPPQREANIYMVPQNIKPALQRTAIEILAWGLRNMKSYQMASISSPSLVVECGGQTVQSCVIRNLRKNPNFDVCTLFMEVMLPREDLYCPPIVVKVIDNRQFGRRPVVGQCTIRSLENFLCDPYSAESPSPQGGPDDVSLLSPGEDVLIDIDDKEPLIPVQEEEFIDWWSKFFASVGEREKCGSYLEKDFDTLKVYDTQLENVEAFGGLSDFCNTFKLYRGRTQEETDDPSVIGEFKGLFKIYPLPEDPAIPMPPRQFHQLAAQGPQECLVRIYIVRAFGLQPKDPNGKCDPYIKISIGKKSVSDQDNYIPCTLEPVFGKMFELTCTLPLEKDLKITLYDYDLLSKDEKIGETVIDLENRLLSKFGARCGLPQTYCVSGPNQWRDQLRPSQLLHLFCQQHRIKAPVYRTDRVTFQDKDYTIEEIEAGRLPNPHLGPVEERLALHVLQQQGLVPEHVESRPLYSPLQPDIEQGKLQMWIDIFPKVLGRPGPPFNITPRKARRFFLRCIIWNTKDVILDDLSLTGEKMSDIYVKGWMVGFEEHKQKTDVHYRSLGGEGNFNWRFVFPFDYLPAEQVCAVAKKDAFWRLDKTESKIPARVVFQIWDNDKFSFDDFLGSLQLDLNRMPKPAKTAEKCSLDQLDDTFHPEWFVSLFEQKTVKGWWPCVTEEGEKKMLAGKLEMTLEIVAESEHEERPAGQGRDEPNMNPKLEDPRRPDTSFLWFTSPYKTMKFILWRRFRCAIILFIILFILLLFLGVFVYAFPNYAAMKLVKPFR</sequence>
<keyword id="KW-0025">Alternative splicing</keyword>
<keyword id="KW-0106">Calcium</keyword>
<keyword id="KW-1003">Cell membrane</keyword>
<keyword id="KW-0968">Cytoplasmic vesicle</keyword>
<keyword id="KW-0446">Lipid-binding</keyword>
<keyword id="KW-0472">Membrane</keyword>
<keyword id="KW-0479">Metal-binding</keyword>
<keyword id="KW-0597">Phosphoprotein</keyword>
<keyword id="KW-1185">Reference proteome</keyword>
<keyword id="KW-0677">Repeat</keyword>
<keyword id="KW-0735">Signal-anchor</keyword>
<keyword id="KW-0812">Transmembrane</keyword>
<keyword id="KW-1133">Transmembrane helix</keyword>
<protein>
    <recommendedName>
        <fullName>Dysferlin</fullName>
    </recommendedName>
    <alternativeName>
        <fullName>Dystrophy-associated fer-1-like protein</fullName>
    </alternativeName>
    <alternativeName>
        <fullName>Fer-1-like protein 1</fullName>
    </alternativeName>
</protein>
<dbReference type="EMBL" id="AF188290">
    <property type="protein sequence ID" value="AAG17046.2"/>
    <property type="molecule type" value="mRNA"/>
</dbReference>
<dbReference type="EMBL" id="AK131144">
    <property type="protein sequence ID" value="BAD21394.1"/>
    <property type="status" value="ALT_INIT"/>
    <property type="molecule type" value="mRNA"/>
</dbReference>
<dbReference type="EMBL" id="AC153607">
    <property type="status" value="NOT_ANNOTATED_CDS"/>
    <property type="molecule type" value="Genomic_DNA"/>
</dbReference>
<dbReference type="EMBL" id="AC153608">
    <property type="status" value="NOT_ANNOTATED_CDS"/>
    <property type="molecule type" value="Genomic_DNA"/>
</dbReference>
<dbReference type="EMBL" id="AJ242954">
    <property type="protein sequence ID" value="CAB63111.1"/>
    <property type="status" value="ALT_SEQ"/>
    <property type="molecule type" value="mRNA"/>
</dbReference>
<dbReference type="EMBL" id="BC043692">
    <property type="protein sequence ID" value="AAH43692.1"/>
    <property type="molecule type" value="mRNA"/>
</dbReference>
<dbReference type="CCDS" id="CCDS39536.1">
    <molecule id="Q9ESD7-2"/>
</dbReference>
<dbReference type="CCDS" id="CCDS85081.1">
    <molecule id="Q9ESD7-3"/>
</dbReference>
<dbReference type="RefSeq" id="NP_001071162.1">
    <property type="nucleotide sequence ID" value="NM_001077694.2"/>
</dbReference>
<dbReference type="RefSeq" id="NP_001297081.1">
    <molecule id="Q9ESD7-3"/>
    <property type="nucleotide sequence ID" value="NM_001310152.1"/>
</dbReference>
<dbReference type="RefSeq" id="NP_067444.2">
    <molecule id="Q9ESD7-2"/>
    <property type="nucleotide sequence ID" value="NM_021469.4"/>
</dbReference>
<dbReference type="SMR" id="Q9ESD7"/>
<dbReference type="BioGRID" id="205052">
    <property type="interactions" value="4"/>
</dbReference>
<dbReference type="FunCoup" id="Q9ESD7">
    <property type="interactions" value="228"/>
</dbReference>
<dbReference type="IntAct" id="Q9ESD7">
    <property type="interactions" value="1"/>
</dbReference>
<dbReference type="MINT" id="Q9ESD7"/>
<dbReference type="STRING" id="10090.ENSMUSP00000080579"/>
<dbReference type="GlyGen" id="Q9ESD7">
    <property type="glycosylation" value="1 site"/>
</dbReference>
<dbReference type="iPTMnet" id="Q9ESD7"/>
<dbReference type="PhosphoSitePlus" id="Q9ESD7"/>
<dbReference type="SwissPalm" id="Q9ESD7"/>
<dbReference type="jPOST" id="Q9ESD7"/>
<dbReference type="PaxDb" id="10090-ENSMUSP00000080579"/>
<dbReference type="PeptideAtlas" id="Q9ESD7"/>
<dbReference type="ProteomicsDB" id="277534">
    <molecule id="Q9ESD7-1"/>
</dbReference>
<dbReference type="ProteomicsDB" id="277535">
    <molecule id="Q9ESD7-2"/>
</dbReference>
<dbReference type="ProteomicsDB" id="277536">
    <molecule id="Q9ESD7-3"/>
</dbReference>
<dbReference type="Pumba" id="Q9ESD7"/>
<dbReference type="Antibodypedia" id="2461">
    <property type="antibodies" value="299 antibodies from 35 providers"/>
</dbReference>
<dbReference type="DNASU" id="26903"/>
<dbReference type="Ensembl" id="ENSMUST00000081904.7">
    <molecule id="Q9ESD7-2"/>
    <property type="protein sequence ID" value="ENSMUSP00000080579.7"/>
    <property type="gene ID" value="ENSMUSG00000033788.16"/>
</dbReference>
<dbReference type="Ensembl" id="ENSMUST00000113818.8">
    <molecule id="Q9ESD7-3"/>
    <property type="protein sequence ID" value="ENSMUSP00000109449.2"/>
    <property type="gene ID" value="ENSMUSG00000033788.16"/>
</dbReference>
<dbReference type="Ensembl" id="ENSMUST00000168387.8">
    <molecule id="Q9ESD7-1"/>
    <property type="protein sequence ID" value="ENSMUSP00000132297.2"/>
    <property type="gene ID" value="ENSMUSG00000033788.16"/>
</dbReference>
<dbReference type="GeneID" id="26903"/>
<dbReference type="KEGG" id="mmu:26903"/>
<dbReference type="UCSC" id="uc009cos.3">
    <molecule id="Q9ESD7-3"/>
    <property type="organism name" value="mouse"/>
</dbReference>
<dbReference type="UCSC" id="uc009cot.2">
    <molecule id="Q9ESD7-2"/>
    <property type="organism name" value="mouse"/>
</dbReference>
<dbReference type="AGR" id="MGI:1349385"/>
<dbReference type="CTD" id="8291"/>
<dbReference type="MGI" id="MGI:1349385">
    <property type="gene designation" value="Dysf"/>
</dbReference>
<dbReference type="VEuPathDB" id="HostDB:ENSMUSG00000033788"/>
<dbReference type="eggNOG" id="KOG1326">
    <property type="taxonomic scope" value="Eukaryota"/>
</dbReference>
<dbReference type="GeneTree" id="ENSGT00940000156187"/>
<dbReference type="HOGENOM" id="CLU_001183_2_1_1"/>
<dbReference type="InParanoid" id="Q9ESD7"/>
<dbReference type="OrthoDB" id="10059618at2759"/>
<dbReference type="TreeFam" id="TF316871"/>
<dbReference type="BioGRID-ORCS" id="26903">
    <property type="hits" value="2 hits in 77 CRISPR screens"/>
</dbReference>
<dbReference type="ChiTaRS" id="Dysf">
    <property type="organism name" value="mouse"/>
</dbReference>
<dbReference type="PRO" id="PR:Q9ESD7"/>
<dbReference type="Proteomes" id="UP000000589">
    <property type="component" value="Chromosome 6"/>
</dbReference>
<dbReference type="RNAct" id="Q9ESD7">
    <property type="molecule type" value="protein"/>
</dbReference>
<dbReference type="Bgee" id="ENSMUSG00000033788">
    <property type="expression patterns" value="Expressed in hindlimb stylopod muscle and 156 other cell types or tissues"/>
</dbReference>
<dbReference type="ExpressionAtlas" id="Q9ESD7">
    <property type="expression patterns" value="baseline and differential"/>
</dbReference>
<dbReference type="GO" id="GO:0031410">
    <property type="term" value="C:cytoplasmic vesicle"/>
    <property type="evidence" value="ECO:0000314"/>
    <property type="project" value="UniProtKB"/>
</dbReference>
<dbReference type="GO" id="GO:0030659">
    <property type="term" value="C:cytoplasmic vesicle membrane"/>
    <property type="evidence" value="ECO:0000304"/>
    <property type="project" value="Reactome"/>
</dbReference>
<dbReference type="GO" id="GO:0005794">
    <property type="term" value="C:Golgi apparatus"/>
    <property type="evidence" value="ECO:0000314"/>
    <property type="project" value="MGI"/>
</dbReference>
<dbReference type="GO" id="GO:0030027">
    <property type="term" value="C:lamellipodium"/>
    <property type="evidence" value="ECO:0000314"/>
    <property type="project" value="UniProtKB"/>
</dbReference>
<dbReference type="GO" id="GO:0098857">
    <property type="term" value="C:membrane microdomain"/>
    <property type="evidence" value="ECO:0000314"/>
    <property type="project" value="MGI"/>
</dbReference>
<dbReference type="GO" id="GO:0005874">
    <property type="term" value="C:microtubule"/>
    <property type="evidence" value="ECO:0000314"/>
    <property type="project" value="MGI"/>
</dbReference>
<dbReference type="GO" id="GO:0005634">
    <property type="term" value="C:nucleus"/>
    <property type="evidence" value="ECO:0000314"/>
    <property type="project" value="MGI"/>
</dbReference>
<dbReference type="GO" id="GO:0005886">
    <property type="term" value="C:plasma membrane"/>
    <property type="evidence" value="ECO:0000314"/>
    <property type="project" value="MGI"/>
</dbReference>
<dbReference type="GO" id="GO:0042383">
    <property type="term" value="C:sarcolemma"/>
    <property type="evidence" value="ECO:0000314"/>
    <property type="project" value="UniProtKB"/>
</dbReference>
<dbReference type="GO" id="GO:0030315">
    <property type="term" value="C:T-tubule"/>
    <property type="evidence" value="ECO:0000314"/>
    <property type="project" value="MGI"/>
</dbReference>
<dbReference type="GO" id="GO:0043014">
    <property type="term" value="F:alpha-tubulin binding"/>
    <property type="evidence" value="ECO:0000314"/>
    <property type="project" value="MGI"/>
</dbReference>
<dbReference type="GO" id="GO:0005509">
    <property type="term" value="F:calcium ion binding"/>
    <property type="evidence" value="ECO:0000250"/>
    <property type="project" value="UniProtKB"/>
</dbReference>
<dbReference type="GO" id="GO:0008017">
    <property type="term" value="F:microtubule binding"/>
    <property type="evidence" value="ECO:0000314"/>
    <property type="project" value="MGI"/>
</dbReference>
<dbReference type="GO" id="GO:0005543">
    <property type="term" value="F:phospholipid binding"/>
    <property type="evidence" value="ECO:0000250"/>
    <property type="project" value="UniProtKB"/>
</dbReference>
<dbReference type="GO" id="GO:0001525">
    <property type="term" value="P:angiogenesis"/>
    <property type="evidence" value="ECO:0000315"/>
    <property type="project" value="MGI"/>
</dbReference>
<dbReference type="GO" id="GO:0071470">
    <property type="term" value="P:cellular response to osmotic stress"/>
    <property type="evidence" value="ECO:0000315"/>
    <property type="project" value="MGI"/>
</dbReference>
<dbReference type="GO" id="GO:0045444">
    <property type="term" value="P:fat cell differentiation"/>
    <property type="evidence" value="ECO:0000315"/>
    <property type="project" value="MGI"/>
</dbReference>
<dbReference type="GO" id="GO:0006071">
    <property type="term" value="P:glycerol metabolic process"/>
    <property type="evidence" value="ECO:0000315"/>
    <property type="project" value="MGI"/>
</dbReference>
<dbReference type="GO" id="GO:0019915">
    <property type="term" value="P:lipid storage"/>
    <property type="evidence" value="ECO:0000315"/>
    <property type="project" value="MGI"/>
</dbReference>
<dbReference type="GO" id="GO:0002281">
    <property type="term" value="P:macrophage activation involved in immune response"/>
    <property type="evidence" value="ECO:0000315"/>
    <property type="project" value="MGI"/>
</dbReference>
<dbReference type="GO" id="GO:0002280">
    <property type="term" value="P:monocyte activation involved in immune response"/>
    <property type="evidence" value="ECO:0000315"/>
    <property type="project" value="MGI"/>
</dbReference>
<dbReference type="GO" id="GO:0055001">
    <property type="term" value="P:muscle cell development"/>
    <property type="evidence" value="ECO:0000315"/>
    <property type="project" value="MGI"/>
</dbReference>
<dbReference type="GO" id="GO:0010629">
    <property type="term" value="P:negative regulation of gene expression"/>
    <property type="evidence" value="ECO:0000315"/>
    <property type="project" value="MGI"/>
</dbReference>
<dbReference type="GO" id="GO:0050765">
    <property type="term" value="P:negative regulation of phagocytosis"/>
    <property type="evidence" value="ECO:0000315"/>
    <property type="project" value="MGI"/>
</dbReference>
<dbReference type="GO" id="GO:0042177">
    <property type="term" value="P:negative regulation of protein catabolic process"/>
    <property type="evidence" value="ECO:0000315"/>
    <property type="project" value="MGI"/>
</dbReference>
<dbReference type="GO" id="GO:1902915">
    <property type="term" value="P:negative regulation of protein polyubiquitination"/>
    <property type="evidence" value="ECO:0000315"/>
    <property type="project" value="MGI"/>
</dbReference>
<dbReference type="GO" id="GO:0001778">
    <property type="term" value="P:plasma membrane repair"/>
    <property type="evidence" value="ECO:0000314"/>
    <property type="project" value="MGI"/>
</dbReference>
<dbReference type="GO" id="GO:0045785">
    <property type="term" value="P:positive regulation of cell adhesion"/>
    <property type="evidence" value="ECO:0000315"/>
    <property type="project" value="MGI"/>
</dbReference>
<dbReference type="GO" id="GO:0001938">
    <property type="term" value="P:positive regulation of endothelial cell proliferation"/>
    <property type="evidence" value="ECO:0000315"/>
    <property type="project" value="MGI"/>
</dbReference>
<dbReference type="GO" id="GO:0090023">
    <property type="term" value="P:positive regulation of neutrophil chemotaxis"/>
    <property type="evidence" value="ECO:0000315"/>
    <property type="project" value="MGI"/>
</dbReference>
<dbReference type="GO" id="GO:0030163">
    <property type="term" value="P:protein catabolic process"/>
    <property type="evidence" value="ECO:0000315"/>
    <property type="project" value="MGI"/>
</dbReference>
<dbReference type="GO" id="GO:0000209">
    <property type="term" value="P:protein polyubiquitination"/>
    <property type="evidence" value="ECO:0000315"/>
    <property type="project" value="MGI"/>
</dbReference>
<dbReference type="GO" id="GO:0090279">
    <property type="term" value="P:regulation of calcium ion import"/>
    <property type="evidence" value="ECO:0000315"/>
    <property type="project" value="MGI"/>
</dbReference>
<dbReference type="GO" id="GO:0043403">
    <property type="term" value="P:skeletal muscle tissue regeneration"/>
    <property type="evidence" value="ECO:0000315"/>
    <property type="project" value="MGI"/>
</dbReference>
<dbReference type="GO" id="GO:0033292">
    <property type="term" value="P:T-tubule organization"/>
    <property type="evidence" value="ECO:0000315"/>
    <property type="project" value="MGI"/>
</dbReference>
<dbReference type="GO" id="GO:0006906">
    <property type="term" value="P:vesicle fusion"/>
    <property type="evidence" value="ECO:0000315"/>
    <property type="project" value="UniProtKB"/>
</dbReference>
<dbReference type="CDD" id="cd08373">
    <property type="entry name" value="C2A_Ferlin"/>
    <property type="match status" value="1"/>
</dbReference>
<dbReference type="CDD" id="cd04011">
    <property type="entry name" value="C2B_Ferlin"/>
    <property type="match status" value="1"/>
</dbReference>
<dbReference type="CDD" id="cd04018">
    <property type="entry name" value="C2C_Ferlin"/>
    <property type="match status" value="1"/>
</dbReference>
<dbReference type="CDD" id="cd04017">
    <property type="entry name" value="C2D_Ferlin"/>
    <property type="match status" value="1"/>
</dbReference>
<dbReference type="CDD" id="cd04037">
    <property type="entry name" value="C2E_Ferlin"/>
    <property type="match status" value="1"/>
</dbReference>
<dbReference type="CDD" id="cd08374">
    <property type="entry name" value="C2F_Ferlin"/>
    <property type="match status" value="1"/>
</dbReference>
<dbReference type="FunFam" id="2.60.40.150:FF:000009">
    <property type="entry name" value="dysferlin isoform X2"/>
    <property type="match status" value="1"/>
</dbReference>
<dbReference type="FunFam" id="2.60.40.150:FF:000021">
    <property type="entry name" value="dysferlin isoform X2"/>
    <property type="match status" value="1"/>
</dbReference>
<dbReference type="FunFam" id="2.60.40.150:FF:000026">
    <property type="entry name" value="dysferlin isoform X2"/>
    <property type="match status" value="1"/>
</dbReference>
<dbReference type="FunFam" id="2.60.40.150:FF:000033">
    <property type="entry name" value="dysferlin isoform X2"/>
    <property type="match status" value="1"/>
</dbReference>
<dbReference type="FunFam" id="2.60.40.150:FF:000037">
    <property type="entry name" value="dysferlin isoform X2"/>
    <property type="match status" value="1"/>
</dbReference>
<dbReference type="FunFam" id="2.60.40.150:FF:000061">
    <property type="entry name" value="dysferlin isoform X8"/>
    <property type="match status" value="1"/>
</dbReference>
<dbReference type="Gene3D" id="2.60.40.150">
    <property type="entry name" value="C2 domain"/>
    <property type="match status" value="6"/>
</dbReference>
<dbReference type="InterPro" id="IPR000008">
    <property type="entry name" value="C2_dom"/>
</dbReference>
<dbReference type="InterPro" id="IPR035892">
    <property type="entry name" value="C2_domain_sf"/>
</dbReference>
<dbReference type="InterPro" id="IPR037726">
    <property type="entry name" value="C2A_Ferlin"/>
</dbReference>
<dbReference type="InterPro" id="IPR037720">
    <property type="entry name" value="C2B_Ferlin"/>
</dbReference>
<dbReference type="InterPro" id="IPR037722">
    <property type="entry name" value="C2C_Ferlin"/>
</dbReference>
<dbReference type="InterPro" id="IPR037723">
    <property type="entry name" value="C2D_Ferlin"/>
</dbReference>
<dbReference type="InterPro" id="IPR037724">
    <property type="entry name" value="C2E_Ferlin"/>
</dbReference>
<dbReference type="InterPro" id="IPR037725">
    <property type="entry name" value="C2F_Ferlin"/>
</dbReference>
<dbReference type="InterPro" id="IPR012968">
    <property type="entry name" value="FerIin_dom"/>
</dbReference>
<dbReference type="InterPro" id="IPR037721">
    <property type="entry name" value="Ferlin"/>
</dbReference>
<dbReference type="InterPro" id="IPR012560">
    <property type="entry name" value="Ferlin_A-domain"/>
</dbReference>
<dbReference type="InterPro" id="IPR012561">
    <property type="entry name" value="Ferlin_B-domain"/>
</dbReference>
<dbReference type="InterPro" id="IPR032362">
    <property type="entry name" value="Ferlin_C"/>
</dbReference>
<dbReference type="InterPro" id="IPR055072">
    <property type="entry name" value="Ferlin_DSRM"/>
</dbReference>
<dbReference type="InterPro" id="IPR006614">
    <property type="entry name" value="Peroxin/Ferlin"/>
</dbReference>
<dbReference type="PANTHER" id="PTHR12546:SF44">
    <property type="entry name" value="DYSFERLIN"/>
    <property type="match status" value="1"/>
</dbReference>
<dbReference type="PANTHER" id="PTHR12546">
    <property type="entry name" value="FER-1-LIKE"/>
    <property type="match status" value="1"/>
</dbReference>
<dbReference type="Pfam" id="PF00168">
    <property type="entry name" value="C2"/>
    <property type="match status" value="7"/>
</dbReference>
<dbReference type="Pfam" id="PF22901">
    <property type="entry name" value="dsrm_Ferlin"/>
    <property type="match status" value="1"/>
</dbReference>
<dbReference type="Pfam" id="PF08165">
    <property type="entry name" value="FerA"/>
    <property type="match status" value="1"/>
</dbReference>
<dbReference type="Pfam" id="PF08150">
    <property type="entry name" value="FerB"/>
    <property type="match status" value="1"/>
</dbReference>
<dbReference type="Pfam" id="PF08151">
    <property type="entry name" value="FerI"/>
    <property type="match status" value="1"/>
</dbReference>
<dbReference type="Pfam" id="PF16165">
    <property type="entry name" value="Ferlin_C"/>
    <property type="match status" value="1"/>
</dbReference>
<dbReference type="SMART" id="SM00239">
    <property type="entry name" value="C2"/>
    <property type="match status" value="7"/>
</dbReference>
<dbReference type="SMART" id="SM00694">
    <property type="entry name" value="DysFC"/>
    <property type="match status" value="2"/>
</dbReference>
<dbReference type="SMART" id="SM00693">
    <property type="entry name" value="DysFN"/>
    <property type="match status" value="2"/>
</dbReference>
<dbReference type="SMART" id="SM01200">
    <property type="entry name" value="FerA"/>
    <property type="match status" value="1"/>
</dbReference>
<dbReference type="SMART" id="SM01201">
    <property type="entry name" value="FerB"/>
    <property type="match status" value="1"/>
</dbReference>
<dbReference type="SMART" id="SM01202">
    <property type="entry name" value="FerI"/>
    <property type="match status" value="1"/>
</dbReference>
<dbReference type="SUPFAM" id="SSF49562">
    <property type="entry name" value="C2 domain (Calcium/lipid-binding domain, CaLB)"/>
    <property type="match status" value="7"/>
</dbReference>
<dbReference type="PROSITE" id="PS50004">
    <property type="entry name" value="C2"/>
    <property type="match status" value="7"/>
</dbReference>
<comment type="function">
    <text evidence="8 9 12">Key calcium ion sensor involved in the Ca(2+)-triggered synaptic vesicle-plasma membrane fusion. Plays a role in the sarcolemma repair mechanism of both skeletal muscle and cardiomyocytes that permits rapid resealing of membranes disrupted by mechanical stress.</text>
</comment>
<comment type="cofactor">
    <cofactor evidence="4">
        <name>Ca(2+)</name>
        <dbReference type="ChEBI" id="CHEBI:29108"/>
    </cofactor>
</comment>
<comment type="subunit">
    <text evidence="1 2 9 10 11 13">Interacts with CAV3. Interacts with AHNAK; the interaction is direct and Ca(2+)-independent. Interacts with AHNAK2; the interaction is direct and Ca(2+)-independent (By similarity). Interacts with ANXA1; the interaction is Ca(2+)- and injury state-dependent. Interacts with ANXA2; the interaction is Ca(2+)- and injury state-dependent. Interacts with CACNA1S and PARVB. Interacts with TRIM72/MG53; interaction is required for transport to sites of cell injury during repair patch formation. Interacts with RIPOR2; this interaction occurs during early myogenic differentiation (By similarity).</text>
</comment>
<comment type="subcellular location">
    <subcellularLocation>
        <location>Cell membrane</location>
        <location>Sarcolemma</location>
        <topology>Single-pass type II membrane protein</topology>
    </subcellularLocation>
    <subcellularLocation>
        <location>Cytoplasmic vesicle membrane</location>
        <topology>Single-pass type II membrane protein</topology>
    </subcellularLocation>
    <subcellularLocation>
        <location evidence="1">Cell membrane</location>
    </subcellularLocation>
    <text evidence="1">Colocalizes, during muscle differentiation, with BIN1 in the T-tubule system of myotubules and at the site of contact between two myotubes or a myoblast and a myotube (By similarity). Accumulates and colocalizes with fusion vesicles at the sarcolemma disruption sites. Wounding of myotubes led to its focal enrichment to the site of injury and to its relocalization in a Ca(2+)-dependent manner toward the plasma membrane (By similarity). Colocalizes with ANXA1 and ANXA2 at the sarcolemma in skeletal muscle. Colocalizes with PARVB at the sarcolemma of skeletal muscle (By similarity). Retained by caveolin at the plasmma membrane. Reaches the plasmma membrane through a caveolin-independent mechanism. Colocalizes, during muscle differentiation, with CACNA1S in the T-tubule system of myotubules. Detected on the apical plasma membrane of the syncytiotrophoblast (By similarity).</text>
</comment>
<comment type="alternative products">
    <event type="alternative splicing"/>
    <isoform>
        <id>Q9ESD7-1</id>
        <name>1</name>
        <sequence type="displayed"/>
    </isoform>
    <isoform>
        <id>Q9ESD7-2</id>
        <name>2</name>
        <sequence type="described" ref="VSP_035930 VSP_035931 VSP_035932 VSP_035933"/>
    </isoform>
    <isoform>
        <id>Q9ESD7-3</id>
        <name>3</name>
        <sequence type="described" ref="VSP_035930 VSP_035932 VSP_035933"/>
    </isoform>
</comment>
<comment type="tissue specificity">
    <text evidence="7 8">Expressed in skeletal and cardiac muscles (at protein level). Expressed in skeletal muscle and heart. Also found in brain, liver and kidney.</text>
</comment>
<comment type="domain">
    <text evidence="1">All seven C2 domains associate with lipid membranes in a calcium-dependent manner. Domains C2 1 and 3 have the highest affinity for calcium, the C2 domain 1 seems to be largely unstructured in the absence of bound ligands (By similarity).</text>
</comment>
<comment type="disease">
    <text evidence="6 7">Defects in Dysf are the cause of a slowly progressive muscular dystrophy observed in SJL mice. It affects primarily the proximal muscles and it is inherited as autosomal recessive trait.</text>
</comment>
<comment type="miscellaneous">
    <text>Mice lacking Dysf maintain a functional dystrophin glycoprotein complex (DGC) but their muscle cells are defective in repairing the plasma membrane disruptions and accumulates vesicles at the sarcolemma. They develop a progressive muscular dystrophy and cardiomyopathy.</text>
</comment>
<comment type="similarity">
    <text evidence="16">Belongs to the ferlin family.</text>
</comment>
<comment type="sequence caution" evidence="16">
    <conflict type="erroneous initiation">
        <sequence resource="EMBL-CDS" id="BAD21394"/>
    </conflict>
</comment>
<comment type="sequence caution" evidence="16">
    <conflict type="miscellaneous discrepancy">
        <sequence resource="EMBL-CDS" id="CAB63111"/>
    </conflict>
    <text>The sequence differs significantly from amino acid position 1855.</text>
</comment>
<name>DYSF_MOUSE</name>
<organism>
    <name type="scientific">Mus musculus</name>
    <name type="common">Mouse</name>
    <dbReference type="NCBI Taxonomy" id="10090"/>
    <lineage>
        <taxon>Eukaryota</taxon>
        <taxon>Metazoa</taxon>
        <taxon>Chordata</taxon>
        <taxon>Craniata</taxon>
        <taxon>Vertebrata</taxon>
        <taxon>Euteleostomi</taxon>
        <taxon>Mammalia</taxon>
        <taxon>Eutheria</taxon>
        <taxon>Euarchontoglires</taxon>
        <taxon>Glires</taxon>
        <taxon>Rodentia</taxon>
        <taxon>Myomorpha</taxon>
        <taxon>Muroidea</taxon>
        <taxon>Muridae</taxon>
        <taxon>Murinae</taxon>
        <taxon>Mus</taxon>
        <taxon>Mus</taxon>
    </lineage>
</organism>
<reference key="1">
    <citation type="journal article" date="2001" name="NeuroReport">
        <title>Cloning of the mouse dysferlin gene and genomic characterization of the SJL-Dysf mutation.</title>
        <authorList>
            <person name="Vafiadaki E."/>
            <person name="Reis A."/>
            <person name="Keers S."/>
            <person name="Harrison R."/>
            <person name="Anderson L.V.B."/>
            <person name="Raffelsberger T."/>
            <person name="Ivanova S."/>
            <person name="Hoeger H."/>
            <person name="Bittner R.E."/>
            <person name="Bushby K.M.D."/>
            <person name="Bashir R."/>
        </authorList>
    </citation>
    <scope>NUCLEOTIDE SEQUENCE [MRNA] (ISOFORM 3)</scope>
    <scope>TISSUE SPECIFICITY</scope>
    <scope>INVOLVEMENT IN PROGRESSIVE MUSCULAR DYSTROPHY</scope>
    <source>
        <strain>BALB/cJ</strain>
        <strain>C57BL/10</strain>
        <strain>SJL/J</strain>
        <tissue>Skeletal muscle</tissue>
    </source>
</reference>
<reference key="2">
    <citation type="journal article" date="2004" name="DNA Res.">
        <title>Prediction of the coding sequences of mouse homologues of FLJ genes: the complete nucleotide sequences of 110 mouse FLJ-homologous cDNAs identified by screening of terminal sequences of cDNA clones randomly sampled from size-fractionated libraries.</title>
        <authorList>
            <person name="Okazaki N."/>
            <person name="Kikuno R."/>
            <person name="Ohara R."/>
            <person name="Inamoto S."/>
            <person name="Koseki H."/>
            <person name="Hiraoka S."/>
            <person name="Saga Y."/>
            <person name="Kitamura H."/>
            <person name="Nakagawa T."/>
            <person name="Nagase T."/>
            <person name="Ohara O."/>
            <person name="Koga H."/>
        </authorList>
    </citation>
    <scope>NUCLEOTIDE SEQUENCE [LARGE SCALE MRNA] (ISOFORM 2)</scope>
    <source>
        <tissue>Thymus</tissue>
    </source>
</reference>
<reference key="3">
    <citation type="journal article" date="2009" name="PLoS Biol.">
        <title>Lineage-specific biology revealed by a finished genome assembly of the mouse.</title>
        <authorList>
            <person name="Church D.M."/>
            <person name="Goodstadt L."/>
            <person name="Hillier L.W."/>
            <person name="Zody M.C."/>
            <person name="Goldstein S."/>
            <person name="She X."/>
            <person name="Bult C.J."/>
            <person name="Agarwala R."/>
            <person name="Cherry J.L."/>
            <person name="DiCuccio M."/>
            <person name="Hlavina W."/>
            <person name="Kapustin Y."/>
            <person name="Meric P."/>
            <person name="Maglott D."/>
            <person name="Birtle Z."/>
            <person name="Marques A.C."/>
            <person name="Graves T."/>
            <person name="Zhou S."/>
            <person name="Teague B."/>
            <person name="Potamousis K."/>
            <person name="Churas C."/>
            <person name="Place M."/>
            <person name="Herschleb J."/>
            <person name="Runnheim R."/>
            <person name="Forrest D."/>
            <person name="Amos-Landgraf J."/>
            <person name="Schwartz D.C."/>
            <person name="Cheng Z."/>
            <person name="Lindblad-Toh K."/>
            <person name="Eichler E.E."/>
            <person name="Ponting C.P."/>
        </authorList>
    </citation>
    <scope>NUCLEOTIDE SEQUENCE [LARGE SCALE GENOMIC DNA]</scope>
    <source>
        <strain>C57BL/6J</strain>
    </source>
</reference>
<reference key="4">
    <citation type="journal article" date="1999" name="Nat. Genet.">
        <title>Dysferlin deletion in SJL mice (SJL-Dysf) defines a natural model for limb girdle muscular dystrophy 2B.</title>
        <authorList>
            <person name="Bittner R.E."/>
            <person name="Anderson L.V.B."/>
            <person name="Burkhardt E."/>
            <person name="Bashir R."/>
            <person name="Vafiadaki E."/>
            <person name="Ivanova S."/>
            <person name="Raffelsberger T."/>
            <person name="Maerk I."/>
            <person name="Hoeger H."/>
            <person name="Jung M."/>
            <person name="Karbasiyan M."/>
            <person name="Storch M."/>
            <person name="Lassmann H."/>
            <person name="Moss J.A."/>
            <person name="Davison K."/>
            <person name="Harrison R."/>
            <person name="Bushby K.M.D."/>
            <person name="Reis A."/>
        </authorList>
    </citation>
    <scope>NUCLEOTIDE SEQUENCE [MRNA] OF 467-1854 (ISOFORMS 1/2)</scope>
    <scope>INVOLVEMENT IN PROGRESSIVE MUSCULAR DYSTROPHY</scope>
    <source>
        <strain>B6C3FE</strain>
        <strain>BALB/cJ</strain>
        <strain>C3H/HeJ</strain>
        <strain>C57BL/10</strain>
        <strain>C57BL/6J</strain>
        <tissue>Muscle</tissue>
    </source>
</reference>
<reference key="5">
    <citation type="journal article" date="2004" name="Genome Res.">
        <title>The status, quality, and expansion of the NIH full-length cDNA project: the Mammalian Gene Collection (MGC).</title>
        <authorList>
            <consortium name="The MGC Project Team"/>
        </authorList>
    </citation>
    <scope>NUCLEOTIDE SEQUENCE [LARGE SCALE MRNA] OF 1490-2090 (ISOFORMS 1/2/3)</scope>
    <source>
        <tissue>Mammary tumor</tissue>
    </source>
</reference>
<reference key="6">
    <citation type="journal article" date="2003" name="J. Biol. Chem.">
        <title>Dysferlin interacts with annexins A1 and A2 and mediates sarcolemmal wound-healing.</title>
        <authorList>
            <person name="Lennon N.J."/>
            <person name="Kho A."/>
            <person name="Bacskai B.J."/>
            <person name="Perlmutter S.L."/>
            <person name="Hyman B.T."/>
            <person name="Brown R.H. Jr."/>
        </authorList>
    </citation>
    <scope>FUNCTION</scope>
    <scope>INTERACTION WITH ANXA1 AND ANXA2</scope>
    <scope>SUBCELLULAR LOCATION</scope>
</reference>
<reference key="7">
    <citation type="journal article" date="2003" name="Nature">
        <title>Defective membrane repair in dysferlin-deficient muscular dystrophy.</title>
        <authorList>
            <person name="Bansal D."/>
            <person name="Miyake K."/>
            <person name="Vogel S.S."/>
            <person name="Groh S."/>
            <person name="Chen C.C."/>
            <person name="Williamson R."/>
            <person name="McNeil P.L."/>
            <person name="Campbell K.P."/>
        </authorList>
    </citation>
    <scope>FUNCTION</scope>
    <scope>SUBCELLULAR LOCATION</scope>
    <scope>TISSUE SPECIFICITY</scope>
</reference>
<reference key="8">
    <citation type="journal article" date="2005" name="Acta Myol.">
        <title>Intracellular localization of dysferlin and its association with the dihydropyridine receptor.</title>
        <authorList>
            <person name="Ampong B.N."/>
            <person name="Imamura M."/>
            <person name="Matsumiya T."/>
            <person name="Yoshida M."/>
            <person name="Takeda S."/>
        </authorList>
    </citation>
    <scope>INTERACTION WITH CACNA1S</scope>
    <scope>SUBCELLULAR LOCATION</scope>
</reference>
<reference key="9">
    <citation type="journal article" date="2005" name="J. Neuropathol. Exp. Neurol.">
        <title>Dysferlin interacts with affixin (beta-parvin) at the sarcolemma.</title>
        <authorList>
            <person name="Matsuda C."/>
            <person name="Kameyama K."/>
            <person name="Tagawa K."/>
            <person name="Ogawa M."/>
            <person name="Suzuki A."/>
            <person name="Yamaji S."/>
            <person name="Okamoto H."/>
            <person name="Nishino I."/>
            <person name="Hayashi Y.K."/>
        </authorList>
    </citation>
    <scope>INTERACTION WITH PARVB</scope>
</reference>
<reference key="10">
    <citation type="journal article" date="2007" name="J. Clin. Invest.">
        <title>Dysferlin-mediated membrane repair protects the heart from stress-induced left ventricular injury.</title>
        <authorList>
            <person name="Han R."/>
            <person name="Bansal D."/>
            <person name="Miyake K."/>
            <person name="Muniz V.P."/>
            <person name="Weiss R.M."/>
            <person name="McNeil P.L."/>
            <person name="Campbell K.P."/>
        </authorList>
    </citation>
    <scope>FUNCTION</scope>
    <scope>SUBCELLULAR LOCATION</scope>
</reference>
<reference key="11">
    <citation type="journal article" date="2008" name="J. Biol. Chem.">
        <title>Caveolin regulates endocytosis of the muscle repair protein, dysferlin.</title>
        <authorList>
            <person name="Hernandez-Deviez D.J."/>
            <person name="Howes M.T."/>
            <person name="Laval S.H."/>
            <person name="Bushby K."/>
            <person name="Hancock J.F."/>
            <person name="Parton R.G."/>
        </authorList>
    </citation>
    <scope>SUBCELLULAR LOCATION</scope>
</reference>
<reference key="12">
    <citation type="journal article" date="2009" name="J. Biol. Chem.">
        <title>Membrane repair defects in muscular dystrophy are linked to altered interaction between MG53, caveolin-3, and dysferlin.</title>
        <authorList>
            <person name="Cai C."/>
            <person name="Weisleder N."/>
            <person name="Ko J.-K."/>
            <person name="Komazaki S."/>
            <person name="Sunada Y."/>
            <person name="Nishi M."/>
            <person name="Takeshima H."/>
            <person name="Ma J."/>
        </authorList>
    </citation>
    <scope>INTERACTION WITH TRIM72</scope>
</reference>
<reference key="13">
    <citation type="journal article" date="2010" name="Cell">
        <title>A tissue-specific atlas of mouse protein phosphorylation and expression.</title>
        <authorList>
            <person name="Huttlin E.L."/>
            <person name="Jedrychowski M.P."/>
            <person name="Elias J.E."/>
            <person name="Goswami T."/>
            <person name="Rad R."/>
            <person name="Beausoleil S.A."/>
            <person name="Villen J."/>
            <person name="Haas W."/>
            <person name="Sowa M.E."/>
            <person name="Gygi S.P."/>
        </authorList>
    </citation>
    <scope>PHOSPHORYLATION [LARGE SCALE ANALYSIS] AT SER-164; SER-167; SER-209 AND THR-219 (ISOFORM 2)</scope>
    <scope>IDENTIFICATION BY MASS SPECTROMETRY [LARGE SCALE ANALYSIS]</scope>
    <source>
        <tissue>Brain</tissue>
        <tissue>Brown adipose tissue</tissue>
        <tissue>Heart</tissue>
        <tissue>Kidney</tissue>
        <tissue>Liver</tissue>
        <tissue>Lung</tissue>
        <tissue>Pancreas</tissue>
        <tissue>Spleen</tissue>
    </source>
</reference>
<evidence type="ECO:0000250" key="1"/>
<evidence type="ECO:0000250" key="2">
    <source>
        <dbReference type="UniProtKB" id="O75923"/>
    </source>
</evidence>
<evidence type="ECO:0000255" key="3"/>
<evidence type="ECO:0000255" key="4">
    <source>
        <dbReference type="PROSITE-ProRule" id="PRU00041"/>
    </source>
</evidence>
<evidence type="ECO:0000256" key="5">
    <source>
        <dbReference type="SAM" id="MobiDB-lite"/>
    </source>
</evidence>
<evidence type="ECO:0000269" key="6">
    <source>
    </source>
</evidence>
<evidence type="ECO:0000269" key="7">
    <source>
    </source>
</evidence>
<evidence type="ECO:0000269" key="8">
    <source>
    </source>
</evidence>
<evidence type="ECO:0000269" key="9">
    <source>
    </source>
</evidence>
<evidence type="ECO:0000269" key="10">
    <source>
    </source>
</evidence>
<evidence type="ECO:0000269" key="11">
    <source>
    </source>
</evidence>
<evidence type="ECO:0000269" key="12">
    <source>
    </source>
</evidence>
<evidence type="ECO:0000269" key="13">
    <source>
    </source>
</evidence>
<evidence type="ECO:0000303" key="14">
    <source>
    </source>
</evidence>
<evidence type="ECO:0000303" key="15">
    <source>
    </source>
</evidence>
<evidence type="ECO:0000305" key="16"/>
<evidence type="ECO:0007744" key="17">
    <source>
    </source>
</evidence>